<organism>
    <name type="scientific">Arabidopsis thaliana</name>
    <name type="common">Mouse-ear cress</name>
    <dbReference type="NCBI Taxonomy" id="3702"/>
    <lineage>
        <taxon>Eukaryota</taxon>
        <taxon>Viridiplantae</taxon>
        <taxon>Streptophyta</taxon>
        <taxon>Embryophyta</taxon>
        <taxon>Tracheophyta</taxon>
        <taxon>Spermatophyta</taxon>
        <taxon>Magnoliopsida</taxon>
        <taxon>eudicotyledons</taxon>
        <taxon>Gunneridae</taxon>
        <taxon>Pentapetalae</taxon>
        <taxon>rosids</taxon>
        <taxon>malvids</taxon>
        <taxon>Brassicales</taxon>
        <taxon>Brassicaceae</taxon>
        <taxon>Camelineae</taxon>
        <taxon>Arabidopsis</taxon>
    </lineage>
</organism>
<gene>
    <name type="primary">ACBP6</name>
    <name type="ordered locus">At1g31812</name>
    <name type="ORF">F5M6.27</name>
</gene>
<accession>P57752</accession>
<accession>Q8L9P1</accession>
<dbReference type="EMBL" id="AC079041">
    <property type="protein sequence ID" value="AAG50714.1"/>
    <property type="molecule type" value="Genomic_DNA"/>
</dbReference>
<dbReference type="EMBL" id="CP002684">
    <property type="protein sequence ID" value="AEE31396.1"/>
    <property type="molecule type" value="Genomic_DNA"/>
</dbReference>
<dbReference type="EMBL" id="AF326905">
    <property type="protein sequence ID" value="AAG41487.1"/>
    <property type="molecule type" value="mRNA"/>
</dbReference>
<dbReference type="EMBL" id="AF339724">
    <property type="protein sequence ID" value="AAK00406.1"/>
    <property type="molecule type" value="mRNA"/>
</dbReference>
<dbReference type="EMBL" id="AF380634">
    <property type="protein sequence ID" value="AAK55715.1"/>
    <property type="molecule type" value="mRNA"/>
</dbReference>
<dbReference type="EMBL" id="AY054132">
    <property type="protein sequence ID" value="AAL06793.1"/>
    <property type="molecule type" value="mRNA"/>
</dbReference>
<dbReference type="EMBL" id="AY088324">
    <property type="protein sequence ID" value="AAM65863.1"/>
    <property type="molecule type" value="mRNA"/>
</dbReference>
<dbReference type="PIR" id="H86441">
    <property type="entry name" value="H86441"/>
</dbReference>
<dbReference type="RefSeq" id="NP_174462.1">
    <property type="nucleotide sequence ID" value="NM_102916.4"/>
</dbReference>
<dbReference type="SMR" id="P57752"/>
<dbReference type="BioGRID" id="25303">
    <property type="interactions" value="153"/>
</dbReference>
<dbReference type="FunCoup" id="P57752">
    <property type="interactions" value="1821"/>
</dbReference>
<dbReference type="IntAct" id="P57752">
    <property type="interactions" value="153"/>
</dbReference>
<dbReference type="STRING" id="3702.P57752"/>
<dbReference type="iPTMnet" id="P57752"/>
<dbReference type="MetOSite" id="P57752"/>
<dbReference type="PaxDb" id="3702-AT1G31812.1"/>
<dbReference type="ProteomicsDB" id="244538"/>
<dbReference type="EnsemblPlants" id="AT1G31812.1">
    <property type="protein sequence ID" value="AT1G31812.1"/>
    <property type="gene ID" value="AT1G31812"/>
</dbReference>
<dbReference type="GeneID" id="840069"/>
<dbReference type="Gramene" id="AT1G31812.1">
    <property type="protein sequence ID" value="AT1G31812.1"/>
    <property type="gene ID" value="AT1G31812"/>
</dbReference>
<dbReference type="KEGG" id="ath:AT1G31812"/>
<dbReference type="Araport" id="AT1G31812"/>
<dbReference type="TAIR" id="AT1G31812">
    <property type="gene designation" value="ACBP6"/>
</dbReference>
<dbReference type="eggNOG" id="KOG0817">
    <property type="taxonomic scope" value="Eukaryota"/>
</dbReference>
<dbReference type="HOGENOM" id="CLU_118853_4_1_1"/>
<dbReference type="InParanoid" id="P57752"/>
<dbReference type="OMA" id="RYKFEAW"/>
<dbReference type="OrthoDB" id="346910at2759"/>
<dbReference type="PhylomeDB" id="P57752"/>
<dbReference type="PRO" id="PR:P57752"/>
<dbReference type="Proteomes" id="UP000006548">
    <property type="component" value="Chromosome 1"/>
</dbReference>
<dbReference type="ExpressionAtlas" id="P57752">
    <property type="expression patterns" value="baseline and differential"/>
</dbReference>
<dbReference type="GO" id="GO:0005829">
    <property type="term" value="C:cytosol"/>
    <property type="evidence" value="ECO:0000314"/>
    <property type="project" value="TAIR"/>
</dbReference>
<dbReference type="GO" id="GO:0005634">
    <property type="term" value="C:nucleus"/>
    <property type="evidence" value="ECO:0007005"/>
    <property type="project" value="TAIR"/>
</dbReference>
<dbReference type="GO" id="GO:0005886">
    <property type="term" value="C:plasma membrane"/>
    <property type="evidence" value="ECO:0007669"/>
    <property type="project" value="UniProtKB-SubCell"/>
</dbReference>
<dbReference type="GO" id="GO:0000062">
    <property type="term" value="F:fatty-acyl-CoA binding"/>
    <property type="evidence" value="ECO:0000314"/>
    <property type="project" value="TAIR"/>
</dbReference>
<dbReference type="GO" id="GO:0031210">
    <property type="term" value="F:phosphatidylcholine binding"/>
    <property type="evidence" value="ECO:0000314"/>
    <property type="project" value="TAIR"/>
</dbReference>
<dbReference type="GO" id="GO:0006869">
    <property type="term" value="P:lipid transport"/>
    <property type="evidence" value="ECO:0000314"/>
    <property type="project" value="TAIR"/>
</dbReference>
<dbReference type="GO" id="GO:0009646">
    <property type="term" value="P:response to absence of light"/>
    <property type="evidence" value="ECO:0000304"/>
    <property type="project" value="UniProtKB"/>
</dbReference>
<dbReference type="GO" id="GO:0009409">
    <property type="term" value="P:response to cold"/>
    <property type="evidence" value="ECO:0000270"/>
    <property type="project" value="TAIR"/>
</dbReference>
<dbReference type="GO" id="GO:0050826">
    <property type="term" value="P:response to freezing"/>
    <property type="evidence" value="ECO:0000315"/>
    <property type="project" value="TAIR"/>
</dbReference>
<dbReference type="GO" id="GO:0001666">
    <property type="term" value="P:response to hypoxia"/>
    <property type="evidence" value="ECO:0000270"/>
    <property type="project" value="TAIR"/>
</dbReference>
<dbReference type="CDD" id="cd00435">
    <property type="entry name" value="ACBP"/>
    <property type="match status" value="1"/>
</dbReference>
<dbReference type="FunFam" id="1.20.80.10:FF:000010">
    <property type="entry name" value="Acyl-CoA-binding domain-containing protein 5"/>
    <property type="match status" value="1"/>
</dbReference>
<dbReference type="Gene3D" id="1.20.80.10">
    <property type="match status" value="1"/>
</dbReference>
<dbReference type="InterPro" id="IPR000582">
    <property type="entry name" value="Acyl-CoA-binding_protein"/>
</dbReference>
<dbReference type="InterPro" id="IPR035984">
    <property type="entry name" value="Acyl-CoA-binding_sf"/>
</dbReference>
<dbReference type="InterPro" id="IPR014352">
    <property type="entry name" value="FERM/acyl-CoA-bd_prot_sf"/>
</dbReference>
<dbReference type="PANTHER" id="PTHR23310:SF62">
    <property type="entry name" value="ACYL-COA BINDING PROTEIN 1, ISOFORM A"/>
    <property type="match status" value="1"/>
</dbReference>
<dbReference type="PANTHER" id="PTHR23310">
    <property type="entry name" value="ACYL-COA-BINDING PROTEIN, ACBP"/>
    <property type="match status" value="1"/>
</dbReference>
<dbReference type="Pfam" id="PF00887">
    <property type="entry name" value="ACBP"/>
    <property type="match status" value="1"/>
</dbReference>
<dbReference type="PRINTS" id="PR00689">
    <property type="entry name" value="ACOABINDINGP"/>
</dbReference>
<dbReference type="SUPFAM" id="SSF47027">
    <property type="entry name" value="Acyl-CoA binding protein"/>
    <property type="match status" value="1"/>
</dbReference>
<dbReference type="PROSITE" id="PS51228">
    <property type="entry name" value="ACB_2"/>
    <property type="match status" value="1"/>
</dbReference>
<comment type="function">
    <text evidence="3 5">Binds medium- and long-chain acyl-CoA esters with very high affinity. May function as an intracellular carrier of acyl-CoA esters. Confers resistance to cold and freezing. Interacts with phosphatidylcholine and derivatives, but not phosphatidic acid and lysophosphatidylcholine. May be involved in phospholipid metabolism.</text>
</comment>
<comment type="subunit">
    <text evidence="4">Interacts with PDLP8.</text>
</comment>
<comment type="subcellular location">
    <subcellularLocation>
        <location evidence="3">Cytoplasm</location>
    </subcellularLocation>
    <subcellularLocation>
        <location evidence="4">Cell membrane</location>
    </subcellularLocation>
</comment>
<comment type="tissue specificity">
    <text evidence="3 4 5">Mostly expressed in seeds, stems, and siliques, and, to a lower extent, in leaves, flowers, and roots (at protein level) (PubMed:18621979, PubMed:8660683). Highly expressed in root and shoot phloem companion cells (PubMed:28786767).</text>
</comment>
<comment type="induction">
    <text evidence="3">Up-regulated in constant darkness and down-regulated in the light. Induced by cold (at protein level).</text>
</comment>
<comment type="disruption phenotype">
    <text evidence="3">Enhanced sensitivity to freezing stress.</text>
</comment>
<comment type="similarity">
    <text evidence="6">Belongs to the ACBP family.</text>
</comment>
<evidence type="ECO:0000250" key="1">
    <source>
        <dbReference type="UniProtKB" id="P07107"/>
    </source>
</evidence>
<evidence type="ECO:0000255" key="2">
    <source>
        <dbReference type="PROSITE-ProRule" id="PRU00573"/>
    </source>
</evidence>
<evidence type="ECO:0000269" key="3">
    <source>
    </source>
</evidence>
<evidence type="ECO:0000269" key="4">
    <source>
    </source>
</evidence>
<evidence type="ECO:0000269" key="5">
    <source>
    </source>
</evidence>
<evidence type="ECO:0000305" key="6"/>
<protein>
    <recommendedName>
        <fullName>Acyl-CoA-binding domain-containing protein 6</fullName>
        <shortName>Acyl-CoA binding protein 6</shortName>
    </recommendedName>
    <alternativeName>
        <fullName>Acyl-CoA-binding protein</fullName>
        <shortName>ACBP</shortName>
    </alternativeName>
</protein>
<proteinExistence type="evidence at protein level"/>
<name>ACBP6_ARATH</name>
<feature type="chain" id="PRO_0000214016" description="Acyl-CoA-binding domain-containing protein 6">
    <location>
        <begin position="1"/>
        <end position="92"/>
    </location>
</feature>
<feature type="domain" description="ACB" evidence="2">
    <location>
        <begin position="3"/>
        <end position="88"/>
    </location>
</feature>
<feature type="binding site" evidence="1">
    <location>
        <begin position="30"/>
        <end position="34"/>
    </location>
    <ligand>
        <name>an acyl-CoA</name>
        <dbReference type="ChEBI" id="CHEBI:58342"/>
    </ligand>
</feature>
<feature type="binding site" evidence="1">
    <location>
        <position position="52"/>
    </location>
    <ligand>
        <name>an acyl-CoA</name>
        <dbReference type="ChEBI" id="CHEBI:58342"/>
    </ligand>
</feature>
<feature type="binding site" evidence="1">
    <location>
        <position position="56"/>
    </location>
    <ligand>
        <name>an acyl-CoA</name>
        <dbReference type="ChEBI" id="CHEBI:58342"/>
    </ligand>
</feature>
<feature type="binding site" evidence="1">
    <location>
        <position position="75"/>
    </location>
    <ligand>
        <name>an acyl-CoA</name>
        <dbReference type="ChEBI" id="CHEBI:58342"/>
    </ligand>
</feature>
<feature type="sequence conflict" description="In Ref. 4; AAM65863." evidence="6" ref="4">
    <original>T</original>
    <variation>TS</variation>
    <location>
        <position position="92"/>
    </location>
</feature>
<reference key="1">
    <citation type="journal article" date="2000" name="Nature">
        <title>Sequence and analysis of chromosome 1 of the plant Arabidopsis thaliana.</title>
        <authorList>
            <person name="Theologis A."/>
            <person name="Ecker J.R."/>
            <person name="Palm C.J."/>
            <person name="Federspiel N.A."/>
            <person name="Kaul S."/>
            <person name="White O."/>
            <person name="Alonso J."/>
            <person name="Altafi H."/>
            <person name="Araujo R."/>
            <person name="Bowman C.L."/>
            <person name="Brooks S.Y."/>
            <person name="Buehler E."/>
            <person name="Chan A."/>
            <person name="Chao Q."/>
            <person name="Chen H."/>
            <person name="Cheuk R.F."/>
            <person name="Chin C.W."/>
            <person name="Chung M.K."/>
            <person name="Conn L."/>
            <person name="Conway A.B."/>
            <person name="Conway A.R."/>
            <person name="Creasy T.H."/>
            <person name="Dewar K."/>
            <person name="Dunn P."/>
            <person name="Etgu P."/>
            <person name="Feldblyum T.V."/>
            <person name="Feng J.-D."/>
            <person name="Fong B."/>
            <person name="Fujii C.Y."/>
            <person name="Gill J.E."/>
            <person name="Goldsmith A.D."/>
            <person name="Haas B."/>
            <person name="Hansen N.F."/>
            <person name="Hughes B."/>
            <person name="Huizar L."/>
            <person name="Hunter J.L."/>
            <person name="Jenkins J."/>
            <person name="Johnson-Hopson C."/>
            <person name="Khan S."/>
            <person name="Khaykin E."/>
            <person name="Kim C.J."/>
            <person name="Koo H.L."/>
            <person name="Kremenetskaia I."/>
            <person name="Kurtz D.B."/>
            <person name="Kwan A."/>
            <person name="Lam B."/>
            <person name="Langin-Hooper S."/>
            <person name="Lee A."/>
            <person name="Lee J.M."/>
            <person name="Lenz C.A."/>
            <person name="Li J.H."/>
            <person name="Li Y.-P."/>
            <person name="Lin X."/>
            <person name="Liu S.X."/>
            <person name="Liu Z.A."/>
            <person name="Luros J.S."/>
            <person name="Maiti R."/>
            <person name="Marziali A."/>
            <person name="Militscher J."/>
            <person name="Miranda M."/>
            <person name="Nguyen M."/>
            <person name="Nierman W.C."/>
            <person name="Osborne B.I."/>
            <person name="Pai G."/>
            <person name="Peterson J."/>
            <person name="Pham P.K."/>
            <person name="Rizzo M."/>
            <person name="Rooney T."/>
            <person name="Rowley D."/>
            <person name="Sakano H."/>
            <person name="Salzberg S.L."/>
            <person name="Schwartz J.R."/>
            <person name="Shinn P."/>
            <person name="Southwick A.M."/>
            <person name="Sun H."/>
            <person name="Tallon L.J."/>
            <person name="Tambunga G."/>
            <person name="Toriumi M.J."/>
            <person name="Town C.D."/>
            <person name="Utterback T."/>
            <person name="Van Aken S."/>
            <person name="Vaysberg M."/>
            <person name="Vysotskaia V.S."/>
            <person name="Walker M."/>
            <person name="Wu D."/>
            <person name="Yu G."/>
            <person name="Fraser C.M."/>
            <person name="Venter J.C."/>
            <person name="Davis R.W."/>
        </authorList>
    </citation>
    <scope>NUCLEOTIDE SEQUENCE [LARGE SCALE GENOMIC DNA]</scope>
    <source>
        <strain>cv. Columbia</strain>
    </source>
</reference>
<reference key="2">
    <citation type="journal article" date="2017" name="Plant J.">
        <title>Araport11: a complete reannotation of the Arabidopsis thaliana reference genome.</title>
        <authorList>
            <person name="Cheng C.Y."/>
            <person name="Krishnakumar V."/>
            <person name="Chan A.P."/>
            <person name="Thibaud-Nissen F."/>
            <person name="Schobel S."/>
            <person name="Town C.D."/>
        </authorList>
    </citation>
    <scope>GENOME REANNOTATION</scope>
    <source>
        <strain>cv. Columbia</strain>
    </source>
</reference>
<reference key="3">
    <citation type="journal article" date="2003" name="Science">
        <title>Empirical analysis of transcriptional activity in the Arabidopsis genome.</title>
        <authorList>
            <person name="Yamada K."/>
            <person name="Lim J."/>
            <person name="Dale J.M."/>
            <person name="Chen H."/>
            <person name="Shinn P."/>
            <person name="Palm C.J."/>
            <person name="Southwick A.M."/>
            <person name="Wu H.C."/>
            <person name="Kim C.J."/>
            <person name="Nguyen M."/>
            <person name="Pham P.K."/>
            <person name="Cheuk R.F."/>
            <person name="Karlin-Newmann G."/>
            <person name="Liu S.X."/>
            <person name="Lam B."/>
            <person name="Sakano H."/>
            <person name="Wu T."/>
            <person name="Yu G."/>
            <person name="Miranda M."/>
            <person name="Quach H.L."/>
            <person name="Tripp M."/>
            <person name="Chang C.H."/>
            <person name="Lee J.M."/>
            <person name="Toriumi M.J."/>
            <person name="Chan M.M."/>
            <person name="Tang C.C."/>
            <person name="Onodera C.S."/>
            <person name="Deng J.M."/>
            <person name="Akiyama K."/>
            <person name="Ansari Y."/>
            <person name="Arakawa T."/>
            <person name="Banh J."/>
            <person name="Banno F."/>
            <person name="Bowser L."/>
            <person name="Brooks S.Y."/>
            <person name="Carninci P."/>
            <person name="Chao Q."/>
            <person name="Choy N."/>
            <person name="Enju A."/>
            <person name="Goldsmith A.D."/>
            <person name="Gurjal M."/>
            <person name="Hansen N.F."/>
            <person name="Hayashizaki Y."/>
            <person name="Johnson-Hopson C."/>
            <person name="Hsuan V.W."/>
            <person name="Iida K."/>
            <person name="Karnes M."/>
            <person name="Khan S."/>
            <person name="Koesema E."/>
            <person name="Ishida J."/>
            <person name="Jiang P.X."/>
            <person name="Jones T."/>
            <person name="Kawai J."/>
            <person name="Kamiya A."/>
            <person name="Meyers C."/>
            <person name="Nakajima M."/>
            <person name="Narusaka M."/>
            <person name="Seki M."/>
            <person name="Sakurai T."/>
            <person name="Satou M."/>
            <person name="Tamse R."/>
            <person name="Vaysberg M."/>
            <person name="Wallender E.K."/>
            <person name="Wong C."/>
            <person name="Yamamura Y."/>
            <person name="Yuan S."/>
            <person name="Shinozaki K."/>
            <person name="Davis R.W."/>
            <person name="Theologis A."/>
            <person name="Ecker J.R."/>
        </authorList>
    </citation>
    <scope>NUCLEOTIDE SEQUENCE [LARGE SCALE MRNA]</scope>
    <source>
        <strain>cv. Columbia</strain>
    </source>
</reference>
<reference key="4">
    <citation type="submission" date="2002-03" db="EMBL/GenBank/DDBJ databases">
        <title>Full-length cDNA from Arabidopsis thaliana.</title>
        <authorList>
            <person name="Brover V.V."/>
            <person name="Troukhan M.E."/>
            <person name="Alexandrov N.A."/>
            <person name="Lu Y.-P."/>
            <person name="Flavell R.B."/>
            <person name="Feldmann K.A."/>
        </authorList>
    </citation>
    <scope>NUCLEOTIDE SEQUENCE [LARGE SCALE MRNA]</scope>
</reference>
<reference key="5">
    <citation type="journal article" date="1996" name="Arch. Biochem. Biophys.">
        <title>Characterization of an acyl-CoA-binding protein from Arabidopsis thaliana.</title>
        <authorList>
            <person name="Engeseth N.J."/>
            <person name="Pacovsky R.S."/>
            <person name="Newman T."/>
            <person name="Ohlrogge J.B."/>
        </authorList>
    </citation>
    <scope>FUNCTION</scope>
    <scope>TISSUE SPECIFICITY</scope>
</reference>
<reference key="6">
    <citation type="journal article" date="2008" name="Plant Physiol.">
        <title>Overexpression of the Arabidopsis 10-kilodalton acyl-coenzyme A-binding protein ACBP6 enhances freezing tolerance.</title>
        <authorList>
            <person name="Chen Q.-F."/>
            <person name="Xiao S."/>
            <person name="Chye M.-L."/>
        </authorList>
    </citation>
    <scope>FUNCTION</scope>
    <scope>DISRUPTION PHENOTYPE</scope>
    <scope>TISSUE SPECIFICITY</scope>
    <scope>SUBCELLULAR LOCATION</scope>
    <scope>INDUCTION BY COLD</scope>
</reference>
<reference key="7">
    <citation type="journal article" date="2009" name="Plant Physiol. Biochem.">
        <title>An Arabidopsis family of six acyl-CoA-binding proteins has three cytosolic members.</title>
        <authorList>
            <person name="Xiao S."/>
            <person name="Chye M.-L."/>
        </authorList>
    </citation>
    <scope>GENE FAMILY</scope>
    <scope>NOMENCLATURE</scope>
</reference>
<reference key="8">
    <citation type="journal article" date="2017" name="Plant Signal. Behav.">
        <title>Arabidopsis thaliana Acyl-CoA-binding protein ACBP6 interacts with plasmodesmata-located protein PDLP8.</title>
        <authorList>
            <person name="Ye Z.W."/>
            <person name="Chen Q.F."/>
            <person name="Chye M.L."/>
        </authorList>
    </citation>
    <scope>INTERACTION WITH PDLP8</scope>
    <scope>SUBCELLULAR LOCATION</scope>
    <scope>TISSUE SPECIFICITY</scope>
</reference>
<sequence length="92" mass="10386">MGLKEEFEEHAEKVNTLTELPSNEDLLILYGLYKQAKFGPVDTSRPGMFSMKERAKWDAWKAVEGKSSEEAMNDYITKVKQLLEVAASKAST</sequence>
<keyword id="KW-1003">Cell membrane</keyword>
<keyword id="KW-0963">Cytoplasm</keyword>
<keyword id="KW-0446">Lipid-binding</keyword>
<keyword id="KW-0472">Membrane</keyword>
<keyword id="KW-1185">Reference proteome</keyword>
<keyword id="KW-0813">Transport</keyword>